<reference key="1">
    <citation type="journal article" date="2007" name="J. Bacteriol.">
        <title>Genome sequence of Avery's virulent serotype 2 strain D39 of Streptococcus pneumoniae and comparison with that of unencapsulated laboratory strain R6.</title>
        <authorList>
            <person name="Lanie J.A."/>
            <person name="Ng W.-L."/>
            <person name="Kazmierczak K.M."/>
            <person name="Andrzejewski T.M."/>
            <person name="Davidsen T.M."/>
            <person name="Wayne K.J."/>
            <person name="Tettelin H."/>
            <person name="Glass J.I."/>
            <person name="Winkler M.E."/>
        </authorList>
    </citation>
    <scope>NUCLEOTIDE SEQUENCE [LARGE SCALE GENOMIC DNA]</scope>
    <source>
        <strain>D39 / NCTC 7466</strain>
    </source>
</reference>
<sequence>MKRIAVLTSGGDAPGMNAAIRAVVRQAISEGMEVFGIYDGYAGMVAGEIHPLDAASVGDIISRGGTFLHSARYPEFAQLEGQLKGIEQLKKHGIEGVVVIGGDGSYHGAMRLTEHGFPAIGLPGTIDNDIVGTDFTIGFDTAVTTAMDAIDKIRDTSSSHRRTFVIEVMGRNAGDIALWAGIATGADEIIIPEAGFKMEDIVASIKAGYECGKKHNIIVLAEGVMSAAEFGQKLKEAGDISDLRVTELGHIQRGGSPTPRDRVLASRMGAHAVKLLKEGIGGVAVGIRNEKMVENPILGTAEEGALFSLTAEGKIVVNNPHEADIELSSLNKSLS</sequence>
<accession>Q04L24</accession>
<keyword id="KW-0021">Allosteric enzyme</keyword>
<keyword id="KW-0067">ATP-binding</keyword>
<keyword id="KW-0963">Cytoplasm</keyword>
<keyword id="KW-0324">Glycolysis</keyword>
<keyword id="KW-0418">Kinase</keyword>
<keyword id="KW-0460">Magnesium</keyword>
<keyword id="KW-0479">Metal-binding</keyword>
<keyword id="KW-0547">Nucleotide-binding</keyword>
<keyword id="KW-1185">Reference proteome</keyword>
<keyword id="KW-0808">Transferase</keyword>
<proteinExistence type="inferred from homology"/>
<protein>
    <recommendedName>
        <fullName evidence="1">ATP-dependent 6-phosphofructokinase</fullName>
        <shortName evidence="1">ATP-PFK</shortName>
        <shortName evidence="1">Phosphofructokinase</shortName>
        <ecNumber evidence="1">2.7.1.11</ecNumber>
    </recommendedName>
    <alternativeName>
        <fullName evidence="1">Phosphohexokinase</fullName>
    </alternativeName>
</protein>
<gene>
    <name evidence="1" type="primary">pfkA</name>
    <name type="ordered locus">SPD_0789</name>
</gene>
<dbReference type="EC" id="2.7.1.11" evidence="1"/>
<dbReference type="EMBL" id="CP000410">
    <property type="protein sequence ID" value="ABJ54293.1"/>
    <property type="molecule type" value="Genomic_DNA"/>
</dbReference>
<dbReference type="RefSeq" id="WP_000820847.1">
    <property type="nucleotide sequence ID" value="NZ_JAMLJR010000004.1"/>
</dbReference>
<dbReference type="SMR" id="Q04L24"/>
<dbReference type="PaxDb" id="373153-SPD_0789"/>
<dbReference type="KEGG" id="spd:SPD_0789"/>
<dbReference type="eggNOG" id="COG0205">
    <property type="taxonomic scope" value="Bacteria"/>
</dbReference>
<dbReference type="HOGENOM" id="CLU_020655_0_1_9"/>
<dbReference type="BioCyc" id="SPNE373153:G1G6V-864-MONOMER"/>
<dbReference type="UniPathway" id="UPA00109">
    <property type="reaction ID" value="UER00182"/>
</dbReference>
<dbReference type="Proteomes" id="UP000001452">
    <property type="component" value="Chromosome"/>
</dbReference>
<dbReference type="GO" id="GO:0005945">
    <property type="term" value="C:6-phosphofructokinase complex"/>
    <property type="evidence" value="ECO:0007669"/>
    <property type="project" value="TreeGrafter"/>
</dbReference>
<dbReference type="GO" id="GO:0003872">
    <property type="term" value="F:6-phosphofructokinase activity"/>
    <property type="evidence" value="ECO:0007669"/>
    <property type="project" value="UniProtKB-UniRule"/>
</dbReference>
<dbReference type="GO" id="GO:0016208">
    <property type="term" value="F:AMP binding"/>
    <property type="evidence" value="ECO:0007669"/>
    <property type="project" value="TreeGrafter"/>
</dbReference>
<dbReference type="GO" id="GO:0005524">
    <property type="term" value="F:ATP binding"/>
    <property type="evidence" value="ECO:0007669"/>
    <property type="project" value="UniProtKB-KW"/>
</dbReference>
<dbReference type="GO" id="GO:0070095">
    <property type="term" value="F:fructose-6-phosphate binding"/>
    <property type="evidence" value="ECO:0007669"/>
    <property type="project" value="TreeGrafter"/>
</dbReference>
<dbReference type="GO" id="GO:0042802">
    <property type="term" value="F:identical protein binding"/>
    <property type="evidence" value="ECO:0007669"/>
    <property type="project" value="TreeGrafter"/>
</dbReference>
<dbReference type="GO" id="GO:0046872">
    <property type="term" value="F:metal ion binding"/>
    <property type="evidence" value="ECO:0007669"/>
    <property type="project" value="UniProtKB-KW"/>
</dbReference>
<dbReference type="GO" id="GO:0048029">
    <property type="term" value="F:monosaccharide binding"/>
    <property type="evidence" value="ECO:0007669"/>
    <property type="project" value="TreeGrafter"/>
</dbReference>
<dbReference type="GO" id="GO:0061621">
    <property type="term" value="P:canonical glycolysis"/>
    <property type="evidence" value="ECO:0007669"/>
    <property type="project" value="TreeGrafter"/>
</dbReference>
<dbReference type="GO" id="GO:0030388">
    <property type="term" value="P:fructose 1,6-bisphosphate metabolic process"/>
    <property type="evidence" value="ECO:0007669"/>
    <property type="project" value="TreeGrafter"/>
</dbReference>
<dbReference type="GO" id="GO:0006002">
    <property type="term" value="P:fructose 6-phosphate metabolic process"/>
    <property type="evidence" value="ECO:0007669"/>
    <property type="project" value="InterPro"/>
</dbReference>
<dbReference type="CDD" id="cd00763">
    <property type="entry name" value="Bacterial_PFK"/>
    <property type="match status" value="1"/>
</dbReference>
<dbReference type="FunFam" id="3.40.50.450:FF:000001">
    <property type="entry name" value="ATP-dependent 6-phosphofructokinase"/>
    <property type="match status" value="1"/>
</dbReference>
<dbReference type="FunFam" id="3.40.50.460:FF:000002">
    <property type="entry name" value="ATP-dependent 6-phosphofructokinase"/>
    <property type="match status" value="1"/>
</dbReference>
<dbReference type="Gene3D" id="3.40.50.450">
    <property type="match status" value="1"/>
</dbReference>
<dbReference type="Gene3D" id="3.40.50.460">
    <property type="entry name" value="Phosphofructokinase domain"/>
    <property type="match status" value="1"/>
</dbReference>
<dbReference type="HAMAP" id="MF_00339">
    <property type="entry name" value="Phosphofructokinase_I_B1"/>
    <property type="match status" value="1"/>
</dbReference>
<dbReference type="InterPro" id="IPR022953">
    <property type="entry name" value="ATP_PFK"/>
</dbReference>
<dbReference type="InterPro" id="IPR012003">
    <property type="entry name" value="ATP_PFK_prok-type"/>
</dbReference>
<dbReference type="InterPro" id="IPR012828">
    <property type="entry name" value="PFKA_ATP_prok"/>
</dbReference>
<dbReference type="InterPro" id="IPR015912">
    <property type="entry name" value="Phosphofructokinase_CS"/>
</dbReference>
<dbReference type="InterPro" id="IPR000023">
    <property type="entry name" value="Phosphofructokinase_dom"/>
</dbReference>
<dbReference type="InterPro" id="IPR035966">
    <property type="entry name" value="PKF_sf"/>
</dbReference>
<dbReference type="NCBIfam" id="TIGR02482">
    <property type="entry name" value="PFKA_ATP"/>
    <property type="match status" value="1"/>
</dbReference>
<dbReference type="NCBIfam" id="NF002872">
    <property type="entry name" value="PRK03202.1"/>
    <property type="match status" value="1"/>
</dbReference>
<dbReference type="PANTHER" id="PTHR13697:SF4">
    <property type="entry name" value="ATP-DEPENDENT 6-PHOSPHOFRUCTOKINASE"/>
    <property type="match status" value="1"/>
</dbReference>
<dbReference type="PANTHER" id="PTHR13697">
    <property type="entry name" value="PHOSPHOFRUCTOKINASE"/>
    <property type="match status" value="1"/>
</dbReference>
<dbReference type="Pfam" id="PF00365">
    <property type="entry name" value="PFK"/>
    <property type="match status" value="1"/>
</dbReference>
<dbReference type="PIRSF" id="PIRSF000532">
    <property type="entry name" value="ATP_PFK_prok"/>
    <property type="match status" value="1"/>
</dbReference>
<dbReference type="PRINTS" id="PR00476">
    <property type="entry name" value="PHFRCTKINASE"/>
</dbReference>
<dbReference type="SUPFAM" id="SSF53784">
    <property type="entry name" value="Phosphofructokinase"/>
    <property type="match status" value="1"/>
</dbReference>
<dbReference type="PROSITE" id="PS00433">
    <property type="entry name" value="PHOSPHOFRUCTOKINASE"/>
    <property type="match status" value="1"/>
</dbReference>
<feature type="chain" id="PRO_1000059794" description="ATP-dependent 6-phosphofructokinase">
    <location>
        <begin position="1"/>
        <end position="335"/>
    </location>
</feature>
<feature type="active site" description="Proton acceptor" evidence="1">
    <location>
        <position position="127"/>
    </location>
</feature>
<feature type="binding site" evidence="1">
    <location>
        <position position="11"/>
    </location>
    <ligand>
        <name>ATP</name>
        <dbReference type="ChEBI" id="CHEBI:30616"/>
    </ligand>
</feature>
<feature type="binding site" evidence="1">
    <location>
        <begin position="21"/>
        <end position="25"/>
    </location>
    <ligand>
        <name>ADP</name>
        <dbReference type="ChEBI" id="CHEBI:456216"/>
        <note>allosteric activator; ligand shared between dimeric partners</note>
    </ligand>
</feature>
<feature type="binding site" evidence="1">
    <location>
        <begin position="72"/>
        <end position="73"/>
    </location>
    <ligand>
        <name>ATP</name>
        <dbReference type="ChEBI" id="CHEBI:30616"/>
    </ligand>
</feature>
<feature type="binding site" evidence="1">
    <location>
        <begin position="102"/>
        <end position="105"/>
    </location>
    <ligand>
        <name>ATP</name>
        <dbReference type="ChEBI" id="CHEBI:30616"/>
    </ligand>
</feature>
<feature type="binding site" evidence="1">
    <location>
        <position position="103"/>
    </location>
    <ligand>
        <name>Mg(2+)</name>
        <dbReference type="ChEBI" id="CHEBI:18420"/>
        <note>catalytic</note>
    </ligand>
</feature>
<feature type="binding site" description="in other chain" evidence="1">
    <location>
        <begin position="125"/>
        <end position="127"/>
    </location>
    <ligand>
        <name>substrate</name>
        <note>ligand shared between dimeric partners</note>
    </ligand>
</feature>
<feature type="binding site" description="in other chain" evidence="1">
    <location>
        <position position="154"/>
    </location>
    <ligand>
        <name>ADP</name>
        <dbReference type="ChEBI" id="CHEBI:456216"/>
        <note>allosteric activator; ligand shared between dimeric partners</note>
    </ligand>
</feature>
<feature type="binding site" evidence="1">
    <location>
        <position position="162"/>
    </location>
    <ligand>
        <name>substrate</name>
        <note>ligand shared between dimeric partners</note>
    </ligand>
</feature>
<feature type="binding site" description="in other chain" evidence="1">
    <location>
        <begin position="169"/>
        <end position="171"/>
    </location>
    <ligand>
        <name>substrate</name>
        <note>ligand shared between dimeric partners</note>
    </ligand>
</feature>
<feature type="binding site" description="in other chain" evidence="1">
    <location>
        <begin position="185"/>
        <end position="187"/>
    </location>
    <ligand>
        <name>ADP</name>
        <dbReference type="ChEBI" id="CHEBI:456216"/>
        <note>allosteric activator; ligand shared between dimeric partners</note>
    </ligand>
</feature>
<feature type="binding site" description="in other chain" evidence="1">
    <location>
        <begin position="213"/>
        <end position="215"/>
    </location>
    <ligand>
        <name>ADP</name>
        <dbReference type="ChEBI" id="CHEBI:456216"/>
        <note>allosteric activator; ligand shared between dimeric partners</note>
    </ligand>
</feature>
<feature type="binding site" description="in other chain" evidence="1">
    <location>
        <position position="222"/>
    </location>
    <ligand>
        <name>substrate</name>
        <note>ligand shared between dimeric partners</note>
    </ligand>
</feature>
<feature type="binding site" evidence="1">
    <location>
        <position position="244"/>
    </location>
    <ligand>
        <name>substrate</name>
        <note>ligand shared between dimeric partners</note>
    </ligand>
</feature>
<feature type="binding site" description="in other chain" evidence="1">
    <location>
        <begin position="250"/>
        <end position="253"/>
    </location>
    <ligand>
        <name>substrate</name>
        <note>ligand shared between dimeric partners</note>
    </ligand>
</feature>
<organism>
    <name type="scientific">Streptococcus pneumoniae serotype 2 (strain D39 / NCTC 7466)</name>
    <dbReference type="NCBI Taxonomy" id="373153"/>
    <lineage>
        <taxon>Bacteria</taxon>
        <taxon>Bacillati</taxon>
        <taxon>Bacillota</taxon>
        <taxon>Bacilli</taxon>
        <taxon>Lactobacillales</taxon>
        <taxon>Streptococcaceae</taxon>
        <taxon>Streptococcus</taxon>
    </lineage>
</organism>
<comment type="function">
    <text evidence="1">Catalyzes the phosphorylation of D-fructose 6-phosphate to fructose 1,6-bisphosphate by ATP, the first committing step of glycolysis.</text>
</comment>
<comment type="catalytic activity">
    <reaction evidence="1">
        <text>beta-D-fructose 6-phosphate + ATP = beta-D-fructose 1,6-bisphosphate + ADP + H(+)</text>
        <dbReference type="Rhea" id="RHEA:16109"/>
        <dbReference type="ChEBI" id="CHEBI:15378"/>
        <dbReference type="ChEBI" id="CHEBI:30616"/>
        <dbReference type="ChEBI" id="CHEBI:32966"/>
        <dbReference type="ChEBI" id="CHEBI:57634"/>
        <dbReference type="ChEBI" id="CHEBI:456216"/>
        <dbReference type="EC" id="2.7.1.11"/>
    </reaction>
</comment>
<comment type="cofactor">
    <cofactor evidence="1">
        <name>Mg(2+)</name>
        <dbReference type="ChEBI" id="CHEBI:18420"/>
    </cofactor>
</comment>
<comment type="activity regulation">
    <text evidence="1">Allosterically activated by ADP and other diphosphonucleosides, and allosterically inhibited by phosphoenolpyruvate.</text>
</comment>
<comment type="pathway">
    <text evidence="1">Carbohydrate degradation; glycolysis; D-glyceraldehyde 3-phosphate and glycerone phosphate from D-glucose: step 3/4.</text>
</comment>
<comment type="subunit">
    <text evidence="1">Homotetramer.</text>
</comment>
<comment type="subcellular location">
    <subcellularLocation>
        <location evidence="1">Cytoplasm</location>
    </subcellularLocation>
</comment>
<comment type="similarity">
    <text evidence="1">Belongs to the phosphofructokinase type A (PFKA) family. ATP-dependent PFK group I subfamily. Prokaryotic clade 'B1' sub-subfamily.</text>
</comment>
<evidence type="ECO:0000255" key="1">
    <source>
        <dbReference type="HAMAP-Rule" id="MF_00339"/>
    </source>
</evidence>
<name>PFKA_STRP2</name>